<accession>Q33723</accession>
<comment type="function">
    <text evidence="2">Component of the ubiquinol-cytochrome c reductase complex (complex III or cytochrome b-c1 complex) that is part of the mitochondrial respiratory chain. The b-c1 complex mediates electron transfer from ubiquinol to cytochrome c. Contributes to the generation of a proton gradient across the mitochondrial membrane that is then used for ATP synthesis.</text>
</comment>
<comment type="cofactor">
    <cofactor evidence="2">
        <name>heme b</name>
        <dbReference type="ChEBI" id="CHEBI:60344"/>
    </cofactor>
    <text evidence="2">Binds 2 heme b groups non-covalently.</text>
</comment>
<comment type="subunit">
    <text evidence="2">The cytochrome bc1 complex contains 11 subunits: 3 respiratory subunits (MT-CYB, CYC1 and UQCRFS1), 2 core proteins (UQCRC1 and UQCRC2) and 6 low-molecular weight proteins (UQCRH/QCR6, UQCRB/QCR7, UQCRQ/QCR8, UQCR10/QCR9, UQCR11/QCR10 and a cleavage product of UQCRFS1). This cytochrome bc1 complex then forms a dimer.</text>
</comment>
<comment type="subcellular location">
    <subcellularLocation>
        <location evidence="2">Mitochondrion inner membrane</location>
        <topology evidence="2">Multi-pass membrane protein</topology>
    </subcellularLocation>
</comment>
<comment type="miscellaneous">
    <text evidence="1">Heme 1 (or BL or b562) is low-potential and absorbs at about 562 nm, and heme 2 (or BH or b566) is high-potential and absorbs at about 566 nm.</text>
</comment>
<comment type="similarity">
    <text evidence="3 4">Belongs to the cytochrome b family.</text>
</comment>
<comment type="caution">
    <text evidence="2">The full-length protein contains only eight transmembrane helices, not nine as predicted by bioinformatics tools.</text>
</comment>
<gene>
    <name type="primary">MT-CYB</name>
    <name type="synonym">COB</name>
    <name type="synonym">CYTB</name>
    <name type="synonym">MTCYB</name>
</gene>
<dbReference type="EMBL" id="U07576">
    <property type="protein sequence ID" value="AAC03634.1"/>
    <property type="molecule type" value="Genomic_DNA"/>
</dbReference>
<dbReference type="SMR" id="Q33723"/>
<dbReference type="GO" id="GO:0005743">
    <property type="term" value="C:mitochondrial inner membrane"/>
    <property type="evidence" value="ECO:0007669"/>
    <property type="project" value="UniProtKB-SubCell"/>
</dbReference>
<dbReference type="GO" id="GO:0045275">
    <property type="term" value="C:respiratory chain complex III"/>
    <property type="evidence" value="ECO:0007669"/>
    <property type="project" value="InterPro"/>
</dbReference>
<dbReference type="GO" id="GO:0046872">
    <property type="term" value="F:metal ion binding"/>
    <property type="evidence" value="ECO:0007669"/>
    <property type="project" value="UniProtKB-KW"/>
</dbReference>
<dbReference type="GO" id="GO:0008121">
    <property type="term" value="F:ubiquinol-cytochrome-c reductase activity"/>
    <property type="evidence" value="ECO:0007669"/>
    <property type="project" value="InterPro"/>
</dbReference>
<dbReference type="GO" id="GO:0006122">
    <property type="term" value="P:mitochondrial electron transport, ubiquinol to cytochrome c"/>
    <property type="evidence" value="ECO:0007669"/>
    <property type="project" value="TreeGrafter"/>
</dbReference>
<dbReference type="CDD" id="cd00290">
    <property type="entry name" value="cytochrome_b_C"/>
    <property type="match status" value="1"/>
</dbReference>
<dbReference type="CDD" id="cd00284">
    <property type="entry name" value="Cytochrome_b_N"/>
    <property type="match status" value="1"/>
</dbReference>
<dbReference type="FunFam" id="1.20.810.10:FF:000002">
    <property type="entry name" value="Cytochrome b"/>
    <property type="match status" value="1"/>
</dbReference>
<dbReference type="Gene3D" id="1.20.810.10">
    <property type="entry name" value="Cytochrome Bc1 Complex, Chain C"/>
    <property type="match status" value="1"/>
</dbReference>
<dbReference type="InterPro" id="IPR005798">
    <property type="entry name" value="Cyt_b/b6_C"/>
</dbReference>
<dbReference type="InterPro" id="IPR036150">
    <property type="entry name" value="Cyt_b/b6_C_sf"/>
</dbReference>
<dbReference type="InterPro" id="IPR005797">
    <property type="entry name" value="Cyt_b/b6_N"/>
</dbReference>
<dbReference type="InterPro" id="IPR027387">
    <property type="entry name" value="Cytb/b6-like_sf"/>
</dbReference>
<dbReference type="InterPro" id="IPR030689">
    <property type="entry name" value="Cytochrome_b"/>
</dbReference>
<dbReference type="InterPro" id="IPR048260">
    <property type="entry name" value="Cytochrome_b_C_euk/bac"/>
</dbReference>
<dbReference type="InterPro" id="IPR048259">
    <property type="entry name" value="Cytochrome_b_N_euk/bac"/>
</dbReference>
<dbReference type="InterPro" id="IPR016174">
    <property type="entry name" value="Di-haem_cyt_TM"/>
</dbReference>
<dbReference type="PANTHER" id="PTHR19271">
    <property type="entry name" value="CYTOCHROME B"/>
    <property type="match status" value="1"/>
</dbReference>
<dbReference type="PANTHER" id="PTHR19271:SF16">
    <property type="entry name" value="CYTOCHROME B"/>
    <property type="match status" value="1"/>
</dbReference>
<dbReference type="Pfam" id="PF00032">
    <property type="entry name" value="Cytochrom_B_C"/>
    <property type="match status" value="1"/>
</dbReference>
<dbReference type="Pfam" id="PF00033">
    <property type="entry name" value="Cytochrome_B"/>
    <property type="match status" value="1"/>
</dbReference>
<dbReference type="PIRSF" id="PIRSF038885">
    <property type="entry name" value="COB"/>
    <property type="match status" value="1"/>
</dbReference>
<dbReference type="SUPFAM" id="SSF81648">
    <property type="entry name" value="a domain/subunit of cytochrome bc1 complex (Ubiquinol-cytochrome c reductase)"/>
    <property type="match status" value="1"/>
</dbReference>
<dbReference type="SUPFAM" id="SSF81342">
    <property type="entry name" value="Transmembrane di-heme cytochromes"/>
    <property type="match status" value="1"/>
</dbReference>
<dbReference type="PROSITE" id="PS51003">
    <property type="entry name" value="CYTB_CTER"/>
    <property type="match status" value="1"/>
</dbReference>
<dbReference type="PROSITE" id="PS51002">
    <property type="entry name" value="CYTB_NTER"/>
    <property type="match status" value="1"/>
</dbReference>
<proteinExistence type="inferred from homology"/>
<feature type="chain" id="PRO_0000254776" description="Cytochrome b">
    <location>
        <begin position="1"/>
        <end position="381"/>
    </location>
</feature>
<feature type="transmembrane region" description="Helical" evidence="2">
    <location>
        <begin position="33"/>
        <end position="53"/>
    </location>
</feature>
<feature type="transmembrane region" description="Helical" evidence="2">
    <location>
        <begin position="77"/>
        <end position="98"/>
    </location>
</feature>
<feature type="transmembrane region" description="Helical" evidence="2">
    <location>
        <begin position="113"/>
        <end position="133"/>
    </location>
</feature>
<feature type="transmembrane region" description="Helical" evidence="2">
    <location>
        <begin position="178"/>
        <end position="198"/>
    </location>
</feature>
<feature type="transmembrane region" description="Helical" evidence="2">
    <location>
        <begin position="226"/>
        <end position="246"/>
    </location>
</feature>
<feature type="transmembrane region" description="Helical" evidence="2">
    <location>
        <begin position="288"/>
        <end position="308"/>
    </location>
</feature>
<feature type="transmembrane region" description="Helical" evidence="2">
    <location>
        <begin position="320"/>
        <end position="340"/>
    </location>
</feature>
<feature type="transmembrane region" description="Helical" evidence="2">
    <location>
        <begin position="347"/>
        <end position="367"/>
    </location>
</feature>
<feature type="binding site" description="axial binding residue" evidence="2">
    <location>
        <position position="83"/>
    </location>
    <ligand>
        <name>heme b</name>
        <dbReference type="ChEBI" id="CHEBI:60344"/>
        <label>b562</label>
    </ligand>
    <ligandPart>
        <name>Fe</name>
        <dbReference type="ChEBI" id="CHEBI:18248"/>
    </ligandPart>
</feature>
<feature type="binding site" description="axial binding residue" evidence="2">
    <location>
        <position position="97"/>
    </location>
    <ligand>
        <name>heme b</name>
        <dbReference type="ChEBI" id="CHEBI:60344"/>
        <label>b566</label>
    </ligand>
    <ligandPart>
        <name>Fe</name>
        <dbReference type="ChEBI" id="CHEBI:18248"/>
    </ligandPart>
</feature>
<feature type="binding site" description="axial binding residue" evidence="2">
    <location>
        <position position="182"/>
    </location>
    <ligand>
        <name>heme b</name>
        <dbReference type="ChEBI" id="CHEBI:60344"/>
        <label>b562</label>
    </ligand>
    <ligandPart>
        <name>Fe</name>
        <dbReference type="ChEBI" id="CHEBI:18248"/>
    </ligandPart>
</feature>
<feature type="binding site" description="axial binding residue" evidence="2">
    <location>
        <position position="196"/>
    </location>
    <ligand>
        <name>heme b</name>
        <dbReference type="ChEBI" id="CHEBI:60344"/>
        <label>b566</label>
    </ligand>
    <ligandPart>
        <name>Fe</name>
        <dbReference type="ChEBI" id="CHEBI:18248"/>
    </ligandPart>
</feature>
<feature type="binding site" evidence="2">
    <location>
        <position position="201"/>
    </location>
    <ligand>
        <name>a ubiquinone</name>
        <dbReference type="ChEBI" id="CHEBI:16389"/>
    </ligand>
</feature>
<name>CYB_MURHA</name>
<reference key="1">
    <citation type="journal article" date="1998" name="J. Mammal.">
        <title>Phylogeny of the dasyurid marsupial genus Antechinus based on cytochrome b, 12S rRNA, and protamine P1 genes.</title>
        <authorList>
            <person name="Armstrong L.A."/>
            <person name="Krajewski C."/>
            <person name="Westerman M."/>
        </authorList>
    </citation>
    <scope>NUCLEOTIDE SEQUENCE [GENOMIC DNA]</scope>
</reference>
<organism>
    <name type="scientific">Murexia habbema</name>
    <name type="common">Habbema dasyure</name>
    <name type="synonym">Micromurexia habbema</name>
    <dbReference type="NCBI Taxonomy" id="418664"/>
    <lineage>
        <taxon>Eukaryota</taxon>
        <taxon>Metazoa</taxon>
        <taxon>Chordata</taxon>
        <taxon>Craniata</taxon>
        <taxon>Vertebrata</taxon>
        <taxon>Euteleostomi</taxon>
        <taxon>Mammalia</taxon>
        <taxon>Metatheria</taxon>
        <taxon>Dasyuromorphia</taxon>
        <taxon>Dasyuridae</taxon>
        <taxon>Murexia</taxon>
    </lineage>
</organism>
<evidence type="ECO:0000250" key="1"/>
<evidence type="ECO:0000250" key="2">
    <source>
        <dbReference type="UniProtKB" id="P00157"/>
    </source>
</evidence>
<evidence type="ECO:0000255" key="3">
    <source>
        <dbReference type="PROSITE-ProRule" id="PRU00967"/>
    </source>
</evidence>
<evidence type="ECO:0000255" key="4">
    <source>
        <dbReference type="PROSITE-ProRule" id="PRU00968"/>
    </source>
</evidence>
<keyword id="KW-0249">Electron transport</keyword>
<keyword id="KW-0349">Heme</keyword>
<keyword id="KW-0408">Iron</keyword>
<keyword id="KW-0472">Membrane</keyword>
<keyword id="KW-0479">Metal-binding</keyword>
<keyword id="KW-0496">Mitochondrion</keyword>
<keyword id="KW-0999">Mitochondrion inner membrane</keyword>
<keyword id="KW-0679">Respiratory chain</keyword>
<keyword id="KW-0812">Transmembrane</keyword>
<keyword id="KW-1133">Transmembrane helix</keyword>
<keyword id="KW-0813">Transport</keyword>
<keyword id="KW-0830">Ubiquinone</keyword>
<geneLocation type="mitochondrion"/>
<sequence length="381" mass="42739">MINLRKTHPLMKIINQSFIDLPTPSNISAWWNFGSLLGACLIIQILMGLFLAMHYTSDTLTAFSSVAHICRDVNHGWLIHNLHVNGASMFFMCLFLHMGRGIYYGSYLYKETWNIGVILLLTVMATAFVGYVLPWGQMSFWGATVITNLLSAIPYIGTTLAEWIWGGFAVDKATLTRFFAFHFILPFIVVALAIVHLLFLHETGSNNPSGINPDSDKIPFHPYYTIKDALGMTLLLLALLLLALFSPDSLGDPDNFSPANPLNTPPHIKPEWYFLFAYAILRSIPNKLGGVLALLASILILLIIPLLHTANQRSMMFRPISQTLFWILTANLITLTWIGGQPVEQPFIIIGQLASMLYFLLILVLMPLAGLLENYMLKPEW</sequence>
<protein>
    <recommendedName>
        <fullName>Cytochrome b</fullName>
    </recommendedName>
    <alternativeName>
        <fullName>Complex III subunit 3</fullName>
    </alternativeName>
    <alternativeName>
        <fullName>Complex III subunit III</fullName>
    </alternativeName>
    <alternativeName>
        <fullName>Cytochrome b-c1 complex subunit 3</fullName>
    </alternativeName>
    <alternativeName>
        <fullName>Ubiquinol-cytochrome-c reductase complex cytochrome b subunit</fullName>
    </alternativeName>
</protein>